<organism>
    <name type="scientific">Chlorobaculum parvum (strain DSM 263 / NCIMB 8327)</name>
    <name type="common">Chlorobium vibrioforme subsp. thiosulfatophilum</name>
    <dbReference type="NCBI Taxonomy" id="517417"/>
    <lineage>
        <taxon>Bacteria</taxon>
        <taxon>Pseudomonadati</taxon>
        <taxon>Chlorobiota</taxon>
        <taxon>Chlorobiia</taxon>
        <taxon>Chlorobiales</taxon>
        <taxon>Chlorobiaceae</taxon>
        <taxon>Chlorobaculum</taxon>
    </lineage>
</organism>
<protein>
    <recommendedName>
        <fullName evidence="1">GTPase Obg</fullName>
        <ecNumber evidence="1">3.6.5.-</ecNumber>
    </recommendedName>
    <alternativeName>
        <fullName evidence="1">GTP-binding protein Obg</fullName>
    </alternativeName>
</protein>
<proteinExistence type="inferred from homology"/>
<feature type="chain" id="PRO_0000385822" description="GTPase Obg">
    <location>
        <begin position="1"/>
        <end position="335"/>
    </location>
</feature>
<feature type="domain" description="Obg" evidence="2">
    <location>
        <begin position="1"/>
        <end position="159"/>
    </location>
</feature>
<feature type="domain" description="OBG-type G" evidence="1">
    <location>
        <begin position="160"/>
        <end position="323"/>
    </location>
</feature>
<feature type="binding site" evidence="1">
    <location>
        <begin position="166"/>
        <end position="173"/>
    </location>
    <ligand>
        <name>GTP</name>
        <dbReference type="ChEBI" id="CHEBI:37565"/>
    </ligand>
</feature>
<feature type="binding site" evidence="1">
    <location>
        <position position="173"/>
    </location>
    <ligand>
        <name>Mg(2+)</name>
        <dbReference type="ChEBI" id="CHEBI:18420"/>
    </ligand>
</feature>
<feature type="binding site" evidence="1">
    <location>
        <begin position="191"/>
        <end position="195"/>
    </location>
    <ligand>
        <name>GTP</name>
        <dbReference type="ChEBI" id="CHEBI:37565"/>
    </ligand>
</feature>
<feature type="binding site" evidence="1">
    <location>
        <position position="193"/>
    </location>
    <ligand>
        <name>Mg(2+)</name>
        <dbReference type="ChEBI" id="CHEBI:18420"/>
    </ligand>
</feature>
<feature type="binding site" evidence="1">
    <location>
        <begin position="213"/>
        <end position="216"/>
    </location>
    <ligand>
        <name>GTP</name>
        <dbReference type="ChEBI" id="CHEBI:37565"/>
    </ligand>
</feature>
<feature type="binding site" evidence="1">
    <location>
        <begin position="280"/>
        <end position="283"/>
    </location>
    <ligand>
        <name>GTP</name>
        <dbReference type="ChEBI" id="CHEBI:37565"/>
    </ligand>
</feature>
<feature type="binding site" evidence="1">
    <location>
        <begin position="304"/>
        <end position="306"/>
    </location>
    <ligand>
        <name>GTP</name>
        <dbReference type="ChEBI" id="CHEBI:37565"/>
    </ligand>
</feature>
<name>OBG_CHLP8</name>
<accession>B3QRD8</accession>
<comment type="function">
    <text evidence="1">An essential GTPase which binds GTP, GDP and possibly (p)ppGpp with moderate affinity, with high nucleotide exchange rates and a fairly low GTP hydrolysis rate. Plays a role in control of the cell cycle, stress response, ribosome biogenesis and in those bacteria that undergo differentiation, in morphogenesis control.</text>
</comment>
<comment type="cofactor">
    <cofactor evidence="1">
        <name>Mg(2+)</name>
        <dbReference type="ChEBI" id="CHEBI:18420"/>
    </cofactor>
</comment>
<comment type="subunit">
    <text evidence="1">Monomer.</text>
</comment>
<comment type="subcellular location">
    <subcellularLocation>
        <location evidence="1">Cytoplasm</location>
    </subcellularLocation>
</comment>
<comment type="similarity">
    <text evidence="1">Belongs to the TRAFAC class OBG-HflX-like GTPase superfamily. OBG GTPase family.</text>
</comment>
<dbReference type="EC" id="3.6.5.-" evidence="1"/>
<dbReference type="EMBL" id="CP001099">
    <property type="protein sequence ID" value="ACF10582.1"/>
    <property type="molecule type" value="Genomic_DNA"/>
</dbReference>
<dbReference type="RefSeq" id="WP_012501417.1">
    <property type="nucleotide sequence ID" value="NC_011027.1"/>
</dbReference>
<dbReference type="SMR" id="B3QRD8"/>
<dbReference type="STRING" id="517417.Cpar_0155"/>
<dbReference type="KEGG" id="cpc:Cpar_0155"/>
<dbReference type="eggNOG" id="COG0536">
    <property type="taxonomic scope" value="Bacteria"/>
</dbReference>
<dbReference type="HOGENOM" id="CLU_011747_2_3_10"/>
<dbReference type="OrthoDB" id="9807318at2"/>
<dbReference type="Proteomes" id="UP000008811">
    <property type="component" value="Chromosome"/>
</dbReference>
<dbReference type="GO" id="GO:0005737">
    <property type="term" value="C:cytoplasm"/>
    <property type="evidence" value="ECO:0007669"/>
    <property type="project" value="UniProtKB-SubCell"/>
</dbReference>
<dbReference type="GO" id="GO:0005525">
    <property type="term" value="F:GTP binding"/>
    <property type="evidence" value="ECO:0007669"/>
    <property type="project" value="UniProtKB-UniRule"/>
</dbReference>
<dbReference type="GO" id="GO:0003924">
    <property type="term" value="F:GTPase activity"/>
    <property type="evidence" value="ECO:0007669"/>
    <property type="project" value="UniProtKB-UniRule"/>
</dbReference>
<dbReference type="GO" id="GO:0000287">
    <property type="term" value="F:magnesium ion binding"/>
    <property type="evidence" value="ECO:0007669"/>
    <property type="project" value="InterPro"/>
</dbReference>
<dbReference type="GO" id="GO:0042254">
    <property type="term" value="P:ribosome biogenesis"/>
    <property type="evidence" value="ECO:0007669"/>
    <property type="project" value="UniProtKB-UniRule"/>
</dbReference>
<dbReference type="CDD" id="cd01898">
    <property type="entry name" value="Obg"/>
    <property type="match status" value="1"/>
</dbReference>
<dbReference type="FunFam" id="2.70.210.12:FF:000001">
    <property type="entry name" value="GTPase Obg"/>
    <property type="match status" value="1"/>
</dbReference>
<dbReference type="Gene3D" id="2.70.210.12">
    <property type="entry name" value="GTP1/OBG domain"/>
    <property type="match status" value="1"/>
</dbReference>
<dbReference type="Gene3D" id="3.40.50.300">
    <property type="entry name" value="P-loop containing nucleotide triphosphate hydrolases"/>
    <property type="match status" value="1"/>
</dbReference>
<dbReference type="HAMAP" id="MF_01454">
    <property type="entry name" value="GTPase_Obg"/>
    <property type="match status" value="1"/>
</dbReference>
<dbReference type="InterPro" id="IPR031167">
    <property type="entry name" value="G_OBG"/>
</dbReference>
<dbReference type="InterPro" id="IPR006073">
    <property type="entry name" value="GTP-bd"/>
</dbReference>
<dbReference type="InterPro" id="IPR014100">
    <property type="entry name" value="GTP-bd_Obg/CgtA"/>
</dbReference>
<dbReference type="InterPro" id="IPR006074">
    <property type="entry name" value="GTP1-OBG_CS"/>
</dbReference>
<dbReference type="InterPro" id="IPR006169">
    <property type="entry name" value="GTP1_OBG_dom"/>
</dbReference>
<dbReference type="InterPro" id="IPR036726">
    <property type="entry name" value="GTP1_OBG_dom_sf"/>
</dbReference>
<dbReference type="InterPro" id="IPR045086">
    <property type="entry name" value="OBG_GTPase"/>
</dbReference>
<dbReference type="InterPro" id="IPR027417">
    <property type="entry name" value="P-loop_NTPase"/>
</dbReference>
<dbReference type="NCBIfam" id="TIGR02729">
    <property type="entry name" value="Obg_CgtA"/>
    <property type="match status" value="1"/>
</dbReference>
<dbReference type="NCBIfam" id="NF008955">
    <property type="entry name" value="PRK12297.1"/>
    <property type="match status" value="1"/>
</dbReference>
<dbReference type="NCBIfam" id="NF008956">
    <property type="entry name" value="PRK12299.1"/>
    <property type="match status" value="1"/>
</dbReference>
<dbReference type="PANTHER" id="PTHR11702">
    <property type="entry name" value="DEVELOPMENTALLY REGULATED GTP-BINDING PROTEIN-RELATED"/>
    <property type="match status" value="1"/>
</dbReference>
<dbReference type="PANTHER" id="PTHR11702:SF31">
    <property type="entry name" value="MITOCHONDRIAL RIBOSOME-ASSOCIATED GTPASE 2"/>
    <property type="match status" value="1"/>
</dbReference>
<dbReference type="Pfam" id="PF01018">
    <property type="entry name" value="GTP1_OBG"/>
    <property type="match status" value="1"/>
</dbReference>
<dbReference type="Pfam" id="PF01926">
    <property type="entry name" value="MMR_HSR1"/>
    <property type="match status" value="1"/>
</dbReference>
<dbReference type="PIRSF" id="PIRSF002401">
    <property type="entry name" value="GTP_bd_Obg/CgtA"/>
    <property type="match status" value="1"/>
</dbReference>
<dbReference type="PRINTS" id="PR00326">
    <property type="entry name" value="GTP1OBG"/>
</dbReference>
<dbReference type="SUPFAM" id="SSF82051">
    <property type="entry name" value="Obg GTP-binding protein N-terminal domain"/>
    <property type="match status" value="1"/>
</dbReference>
<dbReference type="SUPFAM" id="SSF52540">
    <property type="entry name" value="P-loop containing nucleoside triphosphate hydrolases"/>
    <property type="match status" value="1"/>
</dbReference>
<dbReference type="PROSITE" id="PS51710">
    <property type="entry name" value="G_OBG"/>
    <property type="match status" value="1"/>
</dbReference>
<dbReference type="PROSITE" id="PS00905">
    <property type="entry name" value="GTP1_OBG"/>
    <property type="match status" value="1"/>
</dbReference>
<dbReference type="PROSITE" id="PS51883">
    <property type="entry name" value="OBG"/>
    <property type="match status" value="1"/>
</dbReference>
<gene>
    <name evidence="1" type="primary">obg</name>
    <name type="ordered locus">Cpar_0155</name>
</gene>
<sequence length="335" mass="35899">MKFVDSAKISVKAGDGGRGCVSFRREKFVPKGGPDGGDGGRGGHVYLRANRQLSTLLDFKYRKSYIAGRGEHGMGARKSGKNGNDVVIGVPCGTVVRNAETGEVLCDMVEDGQEIMIAKGGRGGQGNQHFATATRQAPRFAQPGEKGDEIELEMELKLMADVGLVGFPNAGKSTLISVFSAARPKIADYPFTTLVPNLGIVRYDDYKSFVMADIPGIIEGAAEGRGLGIQFLRHIQRTKTLLVMVPSDSADIAAEYATLLRELEKFDASLLSKPRLAVITKMDIAPEDFAIPELEPGIKVIAISSVAGQGLKALKDELWRQISTSTQITVDDAGN</sequence>
<evidence type="ECO:0000255" key="1">
    <source>
        <dbReference type="HAMAP-Rule" id="MF_01454"/>
    </source>
</evidence>
<evidence type="ECO:0000255" key="2">
    <source>
        <dbReference type="PROSITE-ProRule" id="PRU01231"/>
    </source>
</evidence>
<reference key="1">
    <citation type="submission" date="2008-06" db="EMBL/GenBank/DDBJ databases">
        <title>Complete sequence of Chlorobaculum parvum NCIB 8327.</title>
        <authorList>
            <consortium name="US DOE Joint Genome Institute"/>
            <person name="Lucas S."/>
            <person name="Copeland A."/>
            <person name="Lapidus A."/>
            <person name="Glavina del Rio T."/>
            <person name="Dalin E."/>
            <person name="Tice H."/>
            <person name="Bruce D."/>
            <person name="Goodwin L."/>
            <person name="Pitluck S."/>
            <person name="Schmutz J."/>
            <person name="Larimer F."/>
            <person name="Land M."/>
            <person name="Hauser L."/>
            <person name="Kyrpides N."/>
            <person name="Mikhailova N."/>
            <person name="Zhao F."/>
            <person name="Li T."/>
            <person name="Liu Z."/>
            <person name="Overmann J."/>
            <person name="Bryant D.A."/>
            <person name="Richardson P."/>
        </authorList>
    </citation>
    <scope>NUCLEOTIDE SEQUENCE [LARGE SCALE GENOMIC DNA]</scope>
    <source>
        <strain>DSM 263 / NCIMB 8327</strain>
    </source>
</reference>
<keyword id="KW-0963">Cytoplasm</keyword>
<keyword id="KW-0342">GTP-binding</keyword>
<keyword id="KW-0378">Hydrolase</keyword>
<keyword id="KW-0460">Magnesium</keyword>
<keyword id="KW-0479">Metal-binding</keyword>
<keyword id="KW-0547">Nucleotide-binding</keyword>